<sequence length="142" mass="15872">MKTISANSQTVKRDWYIIDAEGKTLGRMAAEIAHRLRGKHKPEYTPHVDTGDYIVVINAEKVRVTGNKAKDKMYHHHTGYIGGLKSISFEKLIQKAPERTIETAVKGMLPKGPLGRAMFKKLKVYAGESHPHTAQQPQALNV</sequence>
<name>RL13_TERTT</name>
<protein>
    <recommendedName>
        <fullName evidence="1">Large ribosomal subunit protein uL13</fullName>
    </recommendedName>
    <alternativeName>
        <fullName evidence="2">50S ribosomal protein L13</fullName>
    </alternativeName>
</protein>
<accession>C5BS66</accession>
<organism>
    <name type="scientific">Teredinibacter turnerae (strain ATCC 39867 / T7901)</name>
    <dbReference type="NCBI Taxonomy" id="377629"/>
    <lineage>
        <taxon>Bacteria</taxon>
        <taxon>Pseudomonadati</taxon>
        <taxon>Pseudomonadota</taxon>
        <taxon>Gammaproteobacteria</taxon>
        <taxon>Cellvibrionales</taxon>
        <taxon>Cellvibrionaceae</taxon>
        <taxon>Teredinibacter</taxon>
    </lineage>
</organism>
<proteinExistence type="inferred from homology"/>
<dbReference type="EMBL" id="CP001614">
    <property type="protein sequence ID" value="ACR14451.1"/>
    <property type="molecule type" value="Genomic_DNA"/>
</dbReference>
<dbReference type="RefSeq" id="WP_015820565.1">
    <property type="nucleotide sequence ID" value="NC_012997.1"/>
</dbReference>
<dbReference type="SMR" id="C5BS66"/>
<dbReference type="STRING" id="377629.TERTU_3680"/>
<dbReference type="KEGG" id="ttu:TERTU_3680"/>
<dbReference type="eggNOG" id="COG0102">
    <property type="taxonomic scope" value="Bacteria"/>
</dbReference>
<dbReference type="HOGENOM" id="CLU_082184_2_2_6"/>
<dbReference type="OrthoDB" id="9801330at2"/>
<dbReference type="Proteomes" id="UP000009080">
    <property type="component" value="Chromosome"/>
</dbReference>
<dbReference type="GO" id="GO:0022625">
    <property type="term" value="C:cytosolic large ribosomal subunit"/>
    <property type="evidence" value="ECO:0007669"/>
    <property type="project" value="TreeGrafter"/>
</dbReference>
<dbReference type="GO" id="GO:0003729">
    <property type="term" value="F:mRNA binding"/>
    <property type="evidence" value="ECO:0007669"/>
    <property type="project" value="TreeGrafter"/>
</dbReference>
<dbReference type="GO" id="GO:0003735">
    <property type="term" value="F:structural constituent of ribosome"/>
    <property type="evidence" value="ECO:0007669"/>
    <property type="project" value="InterPro"/>
</dbReference>
<dbReference type="GO" id="GO:0017148">
    <property type="term" value="P:negative regulation of translation"/>
    <property type="evidence" value="ECO:0007669"/>
    <property type="project" value="TreeGrafter"/>
</dbReference>
<dbReference type="GO" id="GO:0006412">
    <property type="term" value="P:translation"/>
    <property type="evidence" value="ECO:0007669"/>
    <property type="project" value="UniProtKB-UniRule"/>
</dbReference>
<dbReference type="CDD" id="cd00392">
    <property type="entry name" value="Ribosomal_L13"/>
    <property type="match status" value="1"/>
</dbReference>
<dbReference type="FunFam" id="3.90.1180.10:FF:000001">
    <property type="entry name" value="50S ribosomal protein L13"/>
    <property type="match status" value="1"/>
</dbReference>
<dbReference type="Gene3D" id="3.90.1180.10">
    <property type="entry name" value="Ribosomal protein L13"/>
    <property type="match status" value="1"/>
</dbReference>
<dbReference type="HAMAP" id="MF_01366">
    <property type="entry name" value="Ribosomal_uL13"/>
    <property type="match status" value="1"/>
</dbReference>
<dbReference type="InterPro" id="IPR005822">
    <property type="entry name" value="Ribosomal_uL13"/>
</dbReference>
<dbReference type="InterPro" id="IPR005823">
    <property type="entry name" value="Ribosomal_uL13_bac-type"/>
</dbReference>
<dbReference type="InterPro" id="IPR023563">
    <property type="entry name" value="Ribosomal_uL13_CS"/>
</dbReference>
<dbReference type="InterPro" id="IPR036899">
    <property type="entry name" value="Ribosomal_uL13_sf"/>
</dbReference>
<dbReference type="NCBIfam" id="TIGR01066">
    <property type="entry name" value="rplM_bact"/>
    <property type="match status" value="1"/>
</dbReference>
<dbReference type="PANTHER" id="PTHR11545:SF2">
    <property type="entry name" value="LARGE RIBOSOMAL SUBUNIT PROTEIN UL13M"/>
    <property type="match status" value="1"/>
</dbReference>
<dbReference type="PANTHER" id="PTHR11545">
    <property type="entry name" value="RIBOSOMAL PROTEIN L13"/>
    <property type="match status" value="1"/>
</dbReference>
<dbReference type="Pfam" id="PF00572">
    <property type="entry name" value="Ribosomal_L13"/>
    <property type="match status" value="1"/>
</dbReference>
<dbReference type="PIRSF" id="PIRSF002181">
    <property type="entry name" value="Ribosomal_L13"/>
    <property type="match status" value="1"/>
</dbReference>
<dbReference type="SUPFAM" id="SSF52161">
    <property type="entry name" value="Ribosomal protein L13"/>
    <property type="match status" value="1"/>
</dbReference>
<dbReference type="PROSITE" id="PS00783">
    <property type="entry name" value="RIBOSOMAL_L13"/>
    <property type="match status" value="1"/>
</dbReference>
<evidence type="ECO:0000255" key="1">
    <source>
        <dbReference type="HAMAP-Rule" id="MF_01366"/>
    </source>
</evidence>
<evidence type="ECO:0000305" key="2"/>
<gene>
    <name evidence="1" type="primary">rplM</name>
    <name type="ordered locus">TERTU_3680</name>
</gene>
<comment type="function">
    <text evidence="1">This protein is one of the early assembly proteins of the 50S ribosomal subunit, although it is not seen to bind rRNA by itself. It is important during the early stages of 50S assembly.</text>
</comment>
<comment type="subunit">
    <text evidence="1">Part of the 50S ribosomal subunit.</text>
</comment>
<comment type="similarity">
    <text evidence="1">Belongs to the universal ribosomal protein uL13 family.</text>
</comment>
<feature type="chain" id="PRO_1000214965" description="Large ribosomal subunit protein uL13">
    <location>
        <begin position="1"/>
        <end position="142"/>
    </location>
</feature>
<keyword id="KW-1185">Reference proteome</keyword>
<keyword id="KW-0687">Ribonucleoprotein</keyword>
<keyword id="KW-0689">Ribosomal protein</keyword>
<reference key="1">
    <citation type="journal article" date="2009" name="PLoS ONE">
        <title>The complete genome of Teredinibacter turnerae T7901: an intracellular endosymbiont of marine wood-boring bivalves (shipworms).</title>
        <authorList>
            <person name="Yang J.C."/>
            <person name="Madupu R."/>
            <person name="Durkin A.S."/>
            <person name="Ekborg N.A."/>
            <person name="Pedamallu C.S."/>
            <person name="Hostetler J.B."/>
            <person name="Radune D."/>
            <person name="Toms B.S."/>
            <person name="Henrissat B."/>
            <person name="Coutinho P.M."/>
            <person name="Schwarz S."/>
            <person name="Field L."/>
            <person name="Trindade-Silva A.E."/>
            <person name="Soares C.A.G."/>
            <person name="Elshahawi S."/>
            <person name="Hanora A."/>
            <person name="Schmidt E.W."/>
            <person name="Haygood M.G."/>
            <person name="Posfai J."/>
            <person name="Benner J."/>
            <person name="Madinger C."/>
            <person name="Nove J."/>
            <person name="Anton B."/>
            <person name="Chaudhary K."/>
            <person name="Foster J."/>
            <person name="Holman A."/>
            <person name="Kumar S."/>
            <person name="Lessard P.A."/>
            <person name="Luyten Y.A."/>
            <person name="Slatko B."/>
            <person name="Wood N."/>
            <person name="Wu B."/>
            <person name="Teplitski M."/>
            <person name="Mougous J.D."/>
            <person name="Ward N."/>
            <person name="Eisen J.A."/>
            <person name="Badger J.H."/>
            <person name="Distel D.L."/>
        </authorList>
    </citation>
    <scope>NUCLEOTIDE SEQUENCE [LARGE SCALE GENOMIC DNA]</scope>
    <source>
        <strain>ATCC 39867 / T7901</strain>
    </source>
</reference>